<protein>
    <recommendedName>
        <fullName evidence="1">Photosystem II reaction center protein H</fullName>
        <shortName evidence="1">PSII-H</shortName>
    </recommendedName>
</protein>
<reference key="1">
    <citation type="journal article" date="2007" name="PLoS Genet.">
        <title>Patterns and implications of gene gain and loss in the evolution of Prochlorococcus.</title>
        <authorList>
            <person name="Kettler G.C."/>
            <person name="Martiny A.C."/>
            <person name="Huang K."/>
            <person name="Zucker J."/>
            <person name="Coleman M.L."/>
            <person name="Rodrigue S."/>
            <person name="Chen F."/>
            <person name="Lapidus A."/>
            <person name="Ferriera S."/>
            <person name="Johnson J."/>
            <person name="Steglich C."/>
            <person name="Church G.M."/>
            <person name="Richardson P."/>
            <person name="Chisholm S.W."/>
        </authorList>
    </citation>
    <scope>NUCLEOTIDE SEQUENCE [LARGE SCALE GENOMIC DNA]</scope>
    <source>
        <strain>AS9601</strain>
    </source>
</reference>
<name>PSBH_PROMS</name>
<proteinExistence type="inferred from homology"/>
<gene>
    <name evidence="1" type="primary">psbH</name>
    <name type="ordered locus">A9601_02731</name>
</gene>
<dbReference type="EMBL" id="CP000551">
    <property type="protein sequence ID" value="ABM69561.1"/>
    <property type="molecule type" value="Genomic_DNA"/>
</dbReference>
<dbReference type="RefSeq" id="WP_002805661.1">
    <property type="nucleotide sequence ID" value="NC_008816.1"/>
</dbReference>
<dbReference type="SMR" id="A2BP50"/>
<dbReference type="STRING" id="146891.A9601_02731"/>
<dbReference type="KEGG" id="pmb:A9601_02731"/>
<dbReference type="eggNOG" id="ENOG50332MV">
    <property type="taxonomic scope" value="Bacteria"/>
</dbReference>
<dbReference type="HOGENOM" id="CLU_190203_0_0_3"/>
<dbReference type="OrthoDB" id="427121at2"/>
<dbReference type="Proteomes" id="UP000002590">
    <property type="component" value="Chromosome"/>
</dbReference>
<dbReference type="GO" id="GO:0009523">
    <property type="term" value="C:photosystem II"/>
    <property type="evidence" value="ECO:0007669"/>
    <property type="project" value="UniProtKB-KW"/>
</dbReference>
<dbReference type="GO" id="GO:0031676">
    <property type="term" value="C:plasma membrane-derived thylakoid membrane"/>
    <property type="evidence" value="ECO:0007669"/>
    <property type="project" value="UniProtKB-SubCell"/>
</dbReference>
<dbReference type="GO" id="GO:0042301">
    <property type="term" value="F:phosphate ion binding"/>
    <property type="evidence" value="ECO:0007669"/>
    <property type="project" value="InterPro"/>
</dbReference>
<dbReference type="GO" id="GO:0015979">
    <property type="term" value="P:photosynthesis"/>
    <property type="evidence" value="ECO:0007669"/>
    <property type="project" value="UniProtKB-UniRule"/>
</dbReference>
<dbReference type="GO" id="GO:0050821">
    <property type="term" value="P:protein stabilization"/>
    <property type="evidence" value="ECO:0007669"/>
    <property type="project" value="InterPro"/>
</dbReference>
<dbReference type="Gene3D" id="1.20.5.880">
    <property type="entry name" value="Photosystem II reaction center protein H"/>
    <property type="match status" value="1"/>
</dbReference>
<dbReference type="HAMAP" id="MF_00752">
    <property type="entry name" value="PSII_PsbH"/>
    <property type="match status" value="1"/>
</dbReference>
<dbReference type="InterPro" id="IPR001056">
    <property type="entry name" value="PSII_PsbH"/>
</dbReference>
<dbReference type="InterPro" id="IPR036863">
    <property type="entry name" value="PSII_PsbH_sf"/>
</dbReference>
<dbReference type="NCBIfam" id="NF002728">
    <property type="entry name" value="PRK02624.1"/>
    <property type="match status" value="1"/>
</dbReference>
<dbReference type="PANTHER" id="PTHR34469">
    <property type="entry name" value="PHOTOSYSTEM II REACTION CENTER PROTEIN H"/>
    <property type="match status" value="1"/>
</dbReference>
<dbReference type="PANTHER" id="PTHR34469:SF4">
    <property type="entry name" value="PHOTOSYSTEM II REACTION CENTER PROTEIN H"/>
    <property type="match status" value="1"/>
</dbReference>
<dbReference type="Pfam" id="PF00737">
    <property type="entry name" value="PsbH"/>
    <property type="match status" value="1"/>
</dbReference>
<dbReference type="SUPFAM" id="SSF161025">
    <property type="entry name" value="Photosystem II 10 kDa phosphoprotein PsbH"/>
    <property type="match status" value="1"/>
</dbReference>
<accession>A2BP50</accession>
<comment type="function">
    <text evidence="1">One of the components of the core complex of photosystem II (PSII), required for its stability and/or assembly. PSII is a light-driven water:plastoquinone oxidoreductase that uses light energy to abstract electrons from H(2)O, generating O(2) and a proton gradient subsequently used for ATP formation. It consists of a core antenna complex that captures photons, and an electron transfer chain that converts photonic excitation into a charge separation.</text>
</comment>
<comment type="subunit">
    <text evidence="2">PSII is composed of 1 copy each of membrane proteins PsbA, PsbB, PsbC, PsbD, PsbE, PsbF, PsbH, PsbI, PsbJ, PsbK, PsbL, PsbM, PsbT, PsbX, PsbY, Psb30/Ycf12, peripheral proteins PsbO, CyanoQ (PsbQ), PsbU, PsbV and a large number of cofactors. It forms dimeric complexes.</text>
</comment>
<comment type="subcellular location">
    <subcellularLocation>
        <location evidence="1">Cellular thylakoid membrane</location>
        <topology evidence="1">Single-pass membrane protein</topology>
    </subcellularLocation>
</comment>
<comment type="similarity">
    <text evidence="1">Belongs to the PsbH family.</text>
</comment>
<organism>
    <name type="scientific">Prochlorococcus marinus (strain AS9601)</name>
    <dbReference type="NCBI Taxonomy" id="146891"/>
    <lineage>
        <taxon>Bacteria</taxon>
        <taxon>Bacillati</taxon>
        <taxon>Cyanobacteriota</taxon>
        <taxon>Cyanophyceae</taxon>
        <taxon>Synechococcales</taxon>
        <taxon>Prochlorococcaceae</taxon>
        <taxon>Prochlorococcus</taxon>
    </lineage>
</organism>
<feature type="chain" id="PRO_1000046590" description="Photosystem II reaction center protein H">
    <location>
        <begin position="1"/>
        <end position="66"/>
    </location>
</feature>
<feature type="transmembrane region" description="Helical" evidence="1">
    <location>
        <begin position="27"/>
        <end position="47"/>
    </location>
</feature>
<evidence type="ECO:0000255" key="1">
    <source>
        <dbReference type="HAMAP-Rule" id="MF_00752"/>
    </source>
</evidence>
<evidence type="ECO:0000305" key="2"/>
<sequence length="66" mass="6952">MGQKTALGSLLKAIGNSGQGKVVPGWGAVPVMTVIGLLLLVFLVILLQIYNQSLLLQGFSVDWNGN</sequence>
<keyword id="KW-0472">Membrane</keyword>
<keyword id="KW-0602">Photosynthesis</keyword>
<keyword id="KW-0604">Photosystem II</keyword>
<keyword id="KW-0793">Thylakoid</keyword>
<keyword id="KW-0812">Transmembrane</keyword>
<keyword id="KW-1133">Transmembrane helix</keyword>